<sequence>MANEEDDPVVQEIDVYLAKSLAEKLYLFQYPVRPASMTYDDIPHLSAKIKPKQQKVELEMAIDTLNPNYCRSKGEQIALNVDGACADETSTYSSKLMDKQTFCSSQTTSNTSRYAAALYRQGELHLTPLHGILQLRPSFSYLDKADAKHREREAANEAGDSSQDEAEDDVKQITVRFSRPESEQARQRRVQSYEFLQKKHAEEPWVHLHYYGLRDSRSEHERQYLLCPGSSGVENTELVKSPSEYLMMLMPPSQEEEKDKPVAPSNVLSMAQLRTLPLADQIKILMKNVKVMPFANLMSLLGPSIDSVAVLRGIQKVAMLVQGNWVVKSDILYPKDSSSPHSGVPAEVLCRGRDFVMWKFTQSRWVVRKEVATVTKLCAEDVKDFLEHMAVVRINKGWEFILPYDGEFIKKHPDVVQRQHMLWTGIQAKLEKVYNLVKETMPKKPDAQSGPAGLVCGDQRIQVAKTKAQQNHALLERELQRRKEQLRVPAVPPGVRIKEEPVSEEGEEDEEQEAEEEPMDTSPSGLHSKLANGLPLGRAAGTDSFNGHPPQGCASTPVARELKAFVEATFQRQFVLTLSELKRLFNLHLASLPPGHTLFSGISDRMLQDTVLAAGCKQILVPFPPQTAASPDEQKVFALWESGDMSDQHRQVLLEIFSKNYRVRRNMIQSRLTQECGEDLSKQEVDKVLKDCCVSYGGMWYLKGTVQS</sequence>
<protein>
    <recommendedName>
        <fullName>DNA-directed RNA polymerase III subunit RPC5</fullName>
        <shortName>RNA polymerase III subunit C5</shortName>
    </recommendedName>
    <alternativeName>
        <fullName>DNA-directed RNA polymerase III 80 kDa polypeptide</fullName>
    </alternativeName>
</protein>
<name>RPC5_HUMAN</name>
<accession>Q9NVU0</accession>
<accession>B4DL24</accession>
<accession>B4DUP6</accession>
<accession>H3BT11</accession>
<accession>Q9BWF7</accession>
<accession>Q9H8W8</accession>
<accession>Q9H907</accession>
<accession>Q9P276</accession>
<organism>
    <name type="scientific">Homo sapiens</name>
    <name type="common">Human</name>
    <dbReference type="NCBI Taxonomy" id="9606"/>
    <lineage>
        <taxon>Eukaryota</taxon>
        <taxon>Metazoa</taxon>
        <taxon>Chordata</taxon>
        <taxon>Craniata</taxon>
        <taxon>Vertebrata</taxon>
        <taxon>Euteleostomi</taxon>
        <taxon>Mammalia</taxon>
        <taxon>Eutheria</taxon>
        <taxon>Euarchontoglires</taxon>
        <taxon>Primates</taxon>
        <taxon>Haplorrhini</taxon>
        <taxon>Catarrhini</taxon>
        <taxon>Hominidae</taxon>
        <taxon>Homo</taxon>
    </lineage>
</organism>
<reference key="1">
    <citation type="journal article" date="2002" name="Mol. Cell. Biol.">
        <title>Characterization of human RNA polymerase III identifies orthologues for Saccharomyces cerevisiae RNA polymerase III subunits.</title>
        <authorList>
            <person name="Hu P."/>
            <person name="Wu S."/>
            <person name="Sun Y."/>
            <person name="Yuan C.-C."/>
            <person name="Kobayashi R."/>
            <person name="Myers M.P."/>
            <person name="Hernandez N."/>
        </authorList>
    </citation>
    <scope>NUCLEOTIDE SEQUENCE [MRNA] (ISOFORM 1)</scope>
    <scope>IDENTIFICATION IN THE RNA POL III COMPLEX</scope>
    <scope>IDENTIFICATION BY MASS SPECTROMETRY</scope>
    <scope>INTERACTION WITH POLR3D</scope>
</reference>
<reference key="2">
    <citation type="journal article" date="2000" name="DNA Res.">
        <title>Prediction of the coding sequences of unidentified human genes. XVII. The complete sequences of 100 new cDNA clones from brain which code for large proteins in vitro.</title>
        <authorList>
            <person name="Nagase T."/>
            <person name="Kikuno R."/>
            <person name="Ishikawa K."/>
            <person name="Hirosawa M."/>
            <person name="Ohara O."/>
        </authorList>
    </citation>
    <scope>NUCLEOTIDE SEQUENCE [LARGE SCALE MRNA] (ISOFORM 3)</scope>
    <source>
        <tissue>Brain</tissue>
    </source>
</reference>
<reference key="3">
    <citation type="journal article" date="2004" name="Nat. Genet.">
        <title>Complete sequencing and characterization of 21,243 full-length human cDNAs.</title>
        <authorList>
            <person name="Ota T."/>
            <person name="Suzuki Y."/>
            <person name="Nishikawa T."/>
            <person name="Otsuki T."/>
            <person name="Sugiyama T."/>
            <person name="Irie R."/>
            <person name="Wakamatsu A."/>
            <person name="Hayashi K."/>
            <person name="Sato H."/>
            <person name="Nagai K."/>
            <person name="Kimura K."/>
            <person name="Makita H."/>
            <person name="Sekine M."/>
            <person name="Obayashi M."/>
            <person name="Nishi T."/>
            <person name="Shibahara T."/>
            <person name="Tanaka T."/>
            <person name="Ishii S."/>
            <person name="Yamamoto J."/>
            <person name="Saito K."/>
            <person name="Kawai Y."/>
            <person name="Isono Y."/>
            <person name="Nakamura Y."/>
            <person name="Nagahari K."/>
            <person name="Murakami K."/>
            <person name="Yasuda T."/>
            <person name="Iwayanagi T."/>
            <person name="Wagatsuma M."/>
            <person name="Shiratori A."/>
            <person name="Sudo H."/>
            <person name="Hosoiri T."/>
            <person name="Kaku Y."/>
            <person name="Kodaira H."/>
            <person name="Kondo H."/>
            <person name="Sugawara M."/>
            <person name="Takahashi M."/>
            <person name="Kanda K."/>
            <person name="Yokoi T."/>
            <person name="Furuya T."/>
            <person name="Kikkawa E."/>
            <person name="Omura Y."/>
            <person name="Abe K."/>
            <person name="Kamihara K."/>
            <person name="Katsuta N."/>
            <person name="Sato K."/>
            <person name="Tanikawa M."/>
            <person name="Yamazaki M."/>
            <person name="Ninomiya K."/>
            <person name="Ishibashi T."/>
            <person name="Yamashita H."/>
            <person name="Murakawa K."/>
            <person name="Fujimori K."/>
            <person name="Tanai H."/>
            <person name="Kimata M."/>
            <person name="Watanabe M."/>
            <person name="Hiraoka S."/>
            <person name="Chiba Y."/>
            <person name="Ishida S."/>
            <person name="Ono Y."/>
            <person name="Takiguchi S."/>
            <person name="Watanabe S."/>
            <person name="Yosida M."/>
            <person name="Hotuta T."/>
            <person name="Kusano J."/>
            <person name="Kanehori K."/>
            <person name="Takahashi-Fujii A."/>
            <person name="Hara H."/>
            <person name="Tanase T.-O."/>
            <person name="Nomura Y."/>
            <person name="Togiya S."/>
            <person name="Komai F."/>
            <person name="Hara R."/>
            <person name="Takeuchi K."/>
            <person name="Arita M."/>
            <person name="Imose N."/>
            <person name="Musashino K."/>
            <person name="Yuuki H."/>
            <person name="Oshima A."/>
            <person name="Sasaki N."/>
            <person name="Aotsuka S."/>
            <person name="Yoshikawa Y."/>
            <person name="Matsunawa H."/>
            <person name="Ichihara T."/>
            <person name="Shiohata N."/>
            <person name="Sano S."/>
            <person name="Moriya S."/>
            <person name="Momiyama H."/>
            <person name="Satoh N."/>
            <person name="Takami S."/>
            <person name="Terashima Y."/>
            <person name="Suzuki O."/>
            <person name="Nakagawa S."/>
            <person name="Senoh A."/>
            <person name="Mizoguchi H."/>
            <person name="Goto Y."/>
            <person name="Shimizu F."/>
            <person name="Wakebe H."/>
            <person name="Hishigaki H."/>
            <person name="Watanabe T."/>
            <person name="Sugiyama A."/>
            <person name="Takemoto M."/>
            <person name="Kawakami B."/>
            <person name="Yamazaki M."/>
            <person name="Watanabe K."/>
            <person name="Kumagai A."/>
            <person name="Itakura S."/>
            <person name="Fukuzumi Y."/>
            <person name="Fujimori Y."/>
            <person name="Komiyama M."/>
            <person name="Tashiro H."/>
            <person name="Tanigami A."/>
            <person name="Fujiwara T."/>
            <person name="Ono T."/>
            <person name="Yamada K."/>
            <person name="Fujii Y."/>
            <person name="Ozaki K."/>
            <person name="Hirao M."/>
            <person name="Ohmori Y."/>
            <person name="Kawabata A."/>
            <person name="Hikiji T."/>
            <person name="Kobatake N."/>
            <person name="Inagaki H."/>
            <person name="Ikema Y."/>
            <person name="Okamoto S."/>
            <person name="Okitani R."/>
            <person name="Kawakami T."/>
            <person name="Noguchi S."/>
            <person name="Itoh T."/>
            <person name="Shigeta K."/>
            <person name="Senba T."/>
            <person name="Matsumura K."/>
            <person name="Nakajima Y."/>
            <person name="Mizuno T."/>
            <person name="Morinaga M."/>
            <person name="Sasaki M."/>
            <person name="Togashi T."/>
            <person name="Oyama M."/>
            <person name="Hata H."/>
            <person name="Watanabe M."/>
            <person name="Komatsu T."/>
            <person name="Mizushima-Sugano J."/>
            <person name="Satoh T."/>
            <person name="Shirai Y."/>
            <person name="Takahashi Y."/>
            <person name="Nakagawa K."/>
            <person name="Okumura K."/>
            <person name="Nagase T."/>
            <person name="Nomura N."/>
            <person name="Kikuchi H."/>
            <person name="Masuho Y."/>
            <person name="Yamashita R."/>
            <person name="Nakai K."/>
            <person name="Yada T."/>
            <person name="Nakamura Y."/>
            <person name="Ohara O."/>
            <person name="Isogai T."/>
            <person name="Sugano S."/>
        </authorList>
    </citation>
    <scope>NUCLEOTIDE SEQUENCE [LARGE SCALE MRNA] (ISOFORMS 1; 2; 4 AND 5)</scope>
    <source>
        <tissue>Teratocarcinoma</tissue>
        <tissue>Tongue</tissue>
    </source>
</reference>
<reference key="4">
    <citation type="journal article" date="2004" name="Nature">
        <title>The sequence and analysis of duplication-rich human chromosome 16.</title>
        <authorList>
            <person name="Martin J."/>
            <person name="Han C."/>
            <person name="Gordon L.A."/>
            <person name="Terry A."/>
            <person name="Prabhakar S."/>
            <person name="She X."/>
            <person name="Xie G."/>
            <person name="Hellsten U."/>
            <person name="Chan Y.M."/>
            <person name="Altherr M."/>
            <person name="Couronne O."/>
            <person name="Aerts A."/>
            <person name="Bajorek E."/>
            <person name="Black S."/>
            <person name="Blumer H."/>
            <person name="Branscomb E."/>
            <person name="Brown N.C."/>
            <person name="Bruno W.J."/>
            <person name="Buckingham J.M."/>
            <person name="Callen D.F."/>
            <person name="Campbell C.S."/>
            <person name="Campbell M.L."/>
            <person name="Campbell E.W."/>
            <person name="Caoile C."/>
            <person name="Challacombe J.F."/>
            <person name="Chasteen L.A."/>
            <person name="Chertkov O."/>
            <person name="Chi H.C."/>
            <person name="Christensen M."/>
            <person name="Clark L.M."/>
            <person name="Cohn J.D."/>
            <person name="Denys M."/>
            <person name="Detter J.C."/>
            <person name="Dickson M."/>
            <person name="Dimitrijevic-Bussod M."/>
            <person name="Escobar J."/>
            <person name="Fawcett J.J."/>
            <person name="Flowers D."/>
            <person name="Fotopulos D."/>
            <person name="Glavina T."/>
            <person name="Gomez M."/>
            <person name="Gonzales E."/>
            <person name="Goodstein D."/>
            <person name="Goodwin L.A."/>
            <person name="Grady D.L."/>
            <person name="Grigoriev I."/>
            <person name="Groza M."/>
            <person name="Hammon N."/>
            <person name="Hawkins T."/>
            <person name="Haydu L."/>
            <person name="Hildebrand C.E."/>
            <person name="Huang W."/>
            <person name="Israni S."/>
            <person name="Jett J."/>
            <person name="Jewett P.B."/>
            <person name="Kadner K."/>
            <person name="Kimball H."/>
            <person name="Kobayashi A."/>
            <person name="Krawczyk M.-C."/>
            <person name="Leyba T."/>
            <person name="Longmire J.L."/>
            <person name="Lopez F."/>
            <person name="Lou Y."/>
            <person name="Lowry S."/>
            <person name="Ludeman T."/>
            <person name="Manohar C.F."/>
            <person name="Mark G.A."/>
            <person name="McMurray K.L."/>
            <person name="Meincke L.J."/>
            <person name="Morgan J."/>
            <person name="Moyzis R.K."/>
            <person name="Mundt M.O."/>
            <person name="Munk A.C."/>
            <person name="Nandkeshwar R.D."/>
            <person name="Pitluck S."/>
            <person name="Pollard M."/>
            <person name="Predki P."/>
            <person name="Parson-Quintana B."/>
            <person name="Ramirez L."/>
            <person name="Rash S."/>
            <person name="Retterer J."/>
            <person name="Ricke D.O."/>
            <person name="Robinson D.L."/>
            <person name="Rodriguez A."/>
            <person name="Salamov A."/>
            <person name="Saunders E.H."/>
            <person name="Scott D."/>
            <person name="Shough T."/>
            <person name="Stallings R.L."/>
            <person name="Stalvey M."/>
            <person name="Sutherland R.D."/>
            <person name="Tapia R."/>
            <person name="Tesmer J.G."/>
            <person name="Thayer N."/>
            <person name="Thompson L.S."/>
            <person name="Tice H."/>
            <person name="Torney D.C."/>
            <person name="Tran-Gyamfi M."/>
            <person name="Tsai M."/>
            <person name="Ulanovsky L.E."/>
            <person name="Ustaszewska A."/>
            <person name="Vo N."/>
            <person name="White P.S."/>
            <person name="Williams A.L."/>
            <person name="Wills P.L."/>
            <person name="Wu J.-R."/>
            <person name="Wu K."/>
            <person name="Yang J."/>
            <person name="DeJong P."/>
            <person name="Bruce D."/>
            <person name="Doggett N.A."/>
            <person name="Deaven L."/>
            <person name="Schmutz J."/>
            <person name="Grimwood J."/>
            <person name="Richardson P."/>
            <person name="Rokhsar D.S."/>
            <person name="Eichler E.E."/>
            <person name="Gilna P."/>
            <person name="Lucas S.M."/>
            <person name="Myers R.M."/>
            <person name="Rubin E.M."/>
            <person name="Pennacchio L.A."/>
        </authorList>
    </citation>
    <scope>NUCLEOTIDE SEQUENCE [LARGE SCALE GENOMIC DNA]</scope>
</reference>
<reference key="5">
    <citation type="journal article" date="2004" name="Genome Res.">
        <title>The status, quality, and expansion of the NIH full-length cDNA project: the Mammalian Gene Collection (MGC).</title>
        <authorList>
            <consortium name="The MGC Project Team"/>
        </authorList>
    </citation>
    <scope>NUCLEOTIDE SEQUENCE [LARGE SCALE MRNA] (ISOFORM 2)</scope>
    <source>
        <tissue>Eye</tissue>
    </source>
</reference>
<reference key="6">
    <citation type="journal article" date="2007" name="Science">
        <title>ATM and ATR substrate analysis reveals extensive protein networks responsive to DNA damage.</title>
        <authorList>
            <person name="Matsuoka S."/>
            <person name="Ballif B.A."/>
            <person name="Smogorzewska A."/>
            <person name="McDonald E.R. III"/>
            <person name="Hurov K.E."/>
            <person name="Luo J."/>
            <person name="Bakalarski C.E."/>
            <person name="Zhao Z."/>
            <person name="Solimini N."/>
            <person name="Lerenthal Y."/>
            <person name="Shiloh Y."/>
            <person name="Gygi S.P."/>
            <person name="Elledge S.J."/>
        </authorList>
    </citation>
    <scope>IDENTIFICATION BY MASS SPECTROMETRY [LARGE SCALE ANALYSIS]</scope>
    <source>
        <tissue>Embryonic kidney</tissue>
    </source>
</reference>
<reference key="7">
    <citation type="journal article" date="2008" name="Proc. Natl. Acad. Sci. U.S.A.">
        <title>A quantitative atlas of mitotic phosphorylation.</title>
        <authorList>
            <person name="Dephoure N."/>
            <person name="Zhou C."/>
            <person name="Villen J."/>
            <person name="Beausoleil S.A."/>
            <person name="Bakalarski C.E."/>
            <person name="Elledge S.J."/>
            <person name="Gygi S.P."/>
        </authorList>
    </citation>
    <scope>PHOSPHORYLATION [LARGE SCALE ANALYSIS] AT SER-503 AND SER-522</scope>
    <scope>IDENTIFICATION BY MASS SPECTROMETRY [LARGE SCALE ANALYSIS]</scope>
    <source>
        <tissue>Cervix carcinoma</tissue>
    </source>
</reference>
<reference key="8">
    <citation type="journal article" date="2009" name="Cell">
        <title>RNA polymerase III detects cytosolic DNA and induces type I interferons through the RIG-I pathway.</title>
        <authorList>
            <person name="Chiu Y.-H."/>
            <person name="Macmillan J.B."/>
            <person name="Chen Z.J."/>
        </authorList>
    </citation>
    <scope>FUNCTION</scope>
</reference>
<reference key="9">
    <citation type="journal article" date="2009" name="Nat. Immunol.">
        <title>RIG-I-dependent sensing of poly(dA:dT) through the induction of an RNA polymerase III-transcribed RNA intermediate.</title>
        <authorList>
            <person name="Ablasser A."/>
            <person name="Bauernfeind F."/>
            <person name="Hartmann G."/>
            <person name="Latz E."/>
            <person name="Fitzgerald K.A."/>
            <person name="Hornung V."/>
        </authorList>
    </citation>
    <scope>FUNCTION</scope>
</reference>
<reference key="10">
    <citation type="journal article" date="2009" name="Sci. Signal.">
        <title>Quantitative phosphoproteomic analysis of T cell receptor signaling reveals system-wide modulation of protein-protein interactions.</title>
        <authorList>
            <person name="Mayya V."/>
            <person name="Lundgren D.H."/>
            <person name="Hwang S.-I."/>
            <person name="Rezaul K."/>
            <person name="Wu L."/>
            <person name="Eng J.K."/>
            <person name="Rodionov V."/>
            <person name="Han D.K."/>
        </authorList>
    </citation>
    <scope>PHOSPHORYLATION [LARGE SCALE ANALYSIS] AT SER-161; TYR-224 AND SER-503</scope>
    <scope>IDENTIFICATION BY MASS SPECTROMETRY [LARGE SCALE ANALYSIS]</scope>
    <source>
        <tissue>Leukemic T-cell</tissue>
    </source>
</reference>
<reference key="11">
    <citation type="journal article" date="2010" name="Genome Res.">
        <title>Defining the RNA polymerase III transcriptome: Genome-wide localization of the RNA polymerase III transcription machinery in human cells.</title>
        <authorList>
            <person name="Canella D."/>
            <person name="Praz V."/>
            <person name="Reina J.H."/>
            <person name="Cousin P."/>
            <person name="Hernandez N."/>
        </authorList>
    </citation>
    <scope>FUNCTION OF POL III</scope>
</reference>
<reference key="12">
    <citation type="journal article" date="2010" name="Sci. Signal.">
        <title>Quantitative phosphoproteomics reveals widespread full phosphorylation site occupancy during mitosis.</title>
        <authorList>
            <person name="Olsen J.V."/>
            <person name="Vermeulen M."/>
            <person name="Santamaria A."/>
            <person name="Kumar C."/>
            <person name="Miller M.L."/>
            <person name="Jensen L.J."/>
            <person name="Gnad F."/>
            <person name="Cox J."/>
            <person name="Jensen T.S."/>
            <person name="Nigg E.A."/>
            <person name="Brunak S."/>
            <person name="Mann M."/>
        </authorList>
    </citation>
    <scope>IDENTIFICATION BY MASS SPECTROMETRY [LARGE SCALE ANALYSIS]</scope>
    <source>
        <tissue>Cervix carcinoma</tissue>
    </source>
</reference>
<reference key="13">
    <citation type="journal article" date="2011" name="BMC Syst. Biol.">
        <title>Initial characterization of the human central proteome.</title>
        <authorList>
            <person name="Burkard T.R."/>
            <person name="Planyavsky M."/>
            <person name="Kaupe I."/>
            <person name="Breitwieser F.P."/>
            <person name="Buerckstuemmer T."/>
            <person name="Bennett K.L."/>
            <person name="Superti-Furga G."/>
            <person name="Colinge J."/>
        </authorList>
    </citation>
    <scope>IDENTIFICATION BY MASS SPECTROMETRY [LARGE SCALE ANALYSIS]</scope>
</reference>
<reference key="14">
    <citation type="journal article" date="2011" name="Sci. Signal.">
        <title>System-wide temporal characterization of the proteome and phosphoproteome of human embryonic stem cell differentiation.</title>
        <authorList>
            <person name="Rigbolt K.T."/>
            <person name="Prokhorova T.A."/>
            <person name="Akimov V."/>
            <person name="Henningsen J."/>
            <person name="Johansen P.T."/>
            <person name="Kratchmarova I."/>
            <person name="Kassem M."/>
            <person name="Mann M."/>
            <person name="Olsen J.V."/>
            <person name="Blagoev B."/>
        </authorList>
    </citation>
    <scope>PHOSPHORYLATION [LARGE SCALE ANALYSIS] AT SER-161; SER-162 AND SER-503</scope>
    <scope>IDENTIFICATION BY MASS SPECTROMETRY [LARGE SCALE ANALYSIS]</scope>
</reference>
<reference key="15">
    <citation type="journal article" date="2013" name="J. Proteome Res.">
        <title>Toward a comprehensive characterization of a human cancer cell phosphoproteome.</title>
        <authorList>
            <person name="Zhou H."/>
            <person name="Di Palma S."/>
            <person name="Preisinger C."/>
            <person name="Peng M."/>
            <person name="Polat A.N."/>
            <person name="Heck A.J."/>
            <person name="Mohammed S."/>
        </authorList>
    </citation>
    <scope>PHOSPHORYLATION [LARGE SCALE ANALYSIS] AT SER-192 AND SER-503</scope>
    <scope>IDENTIFICATION BY MASS SPECTROMETRY [LARGE SCALE ANALYSIS]</scope>
    <source>
        <tissue>Cervix carcinoma</tissue>
        <tissue>Erythroleukemia</tissue>
    </source>
</reference>
<reference key="16">
    <citation type="journal article" date="2014" name="J. Proteomics">
        <title>An enzyme assisted RP-RPLC approach for in-depth analysis of human liver phosphoproteome.</title>
        <authorList>
            <person name="Bian Y."/>
            <person name="Song C."/>
            <person name="Cheng K."/>
            <person name="Dong M."/>
            <person name="Wang F."/>
            <person name="Huang J."/>
            <person name="Sun D."/>
            <person name="Wang L."/>
            <person name="Ye M."/>
            <person name="Zou H."/>
        </authorList>
    </citation>
    <scope>PHOSPHORYLATION [LARGE SCALE ANALYSIS] AT SER-161 AND SER-162</scope>
    <scope>IDENTIFICATION BY MASS SPECTROMETRY [LARGE SCALE ANALYSIS]</scope>
    <source>
        <tissue>Liver</tissue>
    </source>
</reference>
<reference key="17">
    <citation type="journal article" date="2014" name="Nat. Struct. Mol. Biol.">
        <title>Uncovering global SUMOylation signaling networks in a site-specific manner.</title>
        <authorList>
            <person name="Hendriks I.A."/>
            <person name="D'Souza R.C."/>
            <person name="Yang B."/>
            <person name="Verlaan-de Vries M."/>
            <person name="Mann M."/>
            <person name="Vertegaal A.C."/>
        </authorList>
    </citation>
    <scope>SUMOYLATION [LARGE SCALE ANALYSIS] AT LYS-498 AND LYS-659</scope>
    <scope>IDENTIFICATION BY MASS SPECTROMETRY [LARGE SCALE ANALYSIS]</scope>
</reference>
<reference key="18">
    <citation type="journal article" date="2014" name="Proc. Natl. Acad. Sci. U.S.A.">
        <title>Mapping of SUMO sites and analysis of SUMOylation changes induced by external stimuli.</title>
        <authorList>
            <person name="Impens F."/>
            <person name="Radoshevich L."/>
            <person name="Cossart P."/>
            <person name="Ribet D."/>
        </authorList>
    </citation>
    <scope>SUMOYLATION [LARGE SCALE ANALYSIS] AT LYS-498</scope>
    <scope>IDENTIFICATION BY MASS SPECTROMETRY [LARGE SCALE ANALYSIS]</scope>
</reference>
<reference key="19">
    <citation type="journal article" date="2015" name="Cell Rep.">
        <title>SUMO-2 orchestrates chromatin modifiers in response to DNA damage.</title>
        <authorList>
            <person name="Hendriks I.A."/>
            <person name="Treffers L.W."/>
            <person name="Verlaan-de Vries M."/>
            <person name="Olsen J.V."/>
            <person name="Vertegaal A.C."/>
        </authorList>
    </citation>
    <scope>SUMOYLATION [LARGE SCALE ANALYSIS] AT LYS-659</scope>
    <scope>IDENTIFICATION BY MASS SPECTROMETRY [LARGE SCALE ANALYSIS]</scope>
</reference>
<reference key="20">
    <citation type="journal article" date="2015" name="Mol. Cell. Proteomics">
        <title>System-wide analysis of SUMOylation dynamics in response to replication stress reveals novel small ubiquitin-like modified target proteins and acceptor lysines relevant for genome stability.</title>
        <authorList>
            <person name="Xiao Z."/>
            <person name="Chang J.G."/>
            <person name="Hendriks I.A."/>
            <person name="Sigurdsson J.O."/>
            <person name="Olsen J.V."/>
            <person name="Vertegaal A.C."/>
        </authorList>
    </citation>
    <scope>SUMOYLATION [LARGE SCALE ANALYSIS] AT LYS-659</scope>
    <scope>IDENTIFICATION BY MASS SPECTROMETRY [LARGE SCALE ANALYSIS]</scope>
</reference>
<reference key="21">
    <citation type="journal article" date="2017" name="Nat. Struct. Mol. Biol.">
        <title>Site-specific mapping of the human SUMO proteome reveals co-modification with phosphorylation.</title>
        <authorList>
            <person name="Hendriks I.A."/>
            <person name="Lyon D."/>
            <person name="Young C."/>
            <person name="Jensen L.J."/>
            <person name="Vertegaal A.C."/>
            <person name="Nielsen M.L."/>
        </authorList>
    </citation>
    <scope>SUMOYLATION [LARGE SCALE ANALYSIS] AT LYS-171; LYS-432; LYS-498 AND LYS-659</scope>
    <scope>IDENTIFICATION BY MASS SPECTROMETRY [LARGE SCALE ANALYSIS]</scope>
</reference>
<reference key="22">
    <citation type="journal article" date="2022" name="Nat. Commun.">
        <title>A cancer-associated RNA polymerase III identity drives robust transcription and expression of snaR-A non-coding RNA.</title>
        <authorList>
            <person name="Van Bortle K."/>
            <person name="Marciano D.P."/>
            <person name="Liu Q."/>
            <person name="Chou T."/>
            <person name="Lipchik A.M."/>
            <person name="Gollapudi S."/>
            <person name="Geller B.S."/>
            <person name="Monte E."/>
            <person name="Kamakaka R.T."/>
            <person name="Snyder M.P."/>
        </authorList>
    </citation>
    <scope>FUNCTION OF POL III</scope>
    <scope>SUBUNIT</scope>
</reference>
<reference key="23">
    <citation type="journal article" date="2020" name="Nat. Commun.">
        <title>Structure of human RNA polymerase III.</title>
        <authorList>
            <person name="Ramsay E.P."/>
            <person name="Abascal-Palacios G."/>
            <person name="Daiss J.L."/>
            <person name="King H."/>
            <person name="Gouge J."/>
            <person name="Pilsl M."/>
            <person name="Beuron F."/>
            <person name="Morris E."/>
            <person name="Gunkel P."/>
            <person name="Engel C."/>
            <person name="Vannini A."/>
        </authorList>
    </citation>
    <scope>X-RAY CRYSTALLOGRAPHY (1.55 ANGSTROMS)</scope>
    <scope>SUBUNIT</scope>
    <scope>SUBCELLULAR LOCATION</scope>
    <scope>REGION</scope>
</reference>
<reference key="24">
    <citation type="journal article" date="2021" name="Cell Res.">
        <title>Structure of human RNA polymerase III elongation complex.</title>
        <authorList>
            <person name="Li L."/>
            <person name="Yu Z."/>
            <person name="Zhao D."/>
            <person name="Ren Y."/>
            <person name="Hou H."/>
            <person name="Xu Y."/>
        </authorList>
    </citation>
    <scope>STRUCTURE BY ELECTRON MICROSCOPY (3.35 ANGSTROMS)</scope>
    <scope>SUBUNIT</scope>
</reference>
<reference key="25">
    <citation type="journal article" date="2021" name="Nat. Commun.">
        <title>Structural insights into RNA polymerase III-mediated transcription termination through trapping poly-deoxythymidine.</title>
        <authorList>
            <person name="Hou H."/>
            <person name="Li Y."/>
            <person name="Wang M."/>
            <person name="Liu A."/>
            <person name="Yu Z."/>
            <person name="Chen K."/>
            <person name="Zhao D."/>
            <person name="Xu Y."/>
        </authorList>
    </citation>
    <scope>STRUCTURE BY ELECTRON MICROSCOPY (3.60 ANGSTROMS)</scope>
    <scope>SUBUNIT</scope>
</reference>
<reference key="26">
    <citation type="journal article" date="2021" name="Nat. Struct. Mol. Biol.">
        <title>Cryo-EM structures of human RNA polymerase III in its unbound and transcribing states.</title>
        <authorList>
            <person name="Girbig M."/>
            <person name="Misiaszek A.D."/>
            <person name="Vorlander M.K."/>
            <person name="Lafita A."/>
            <person name="Grotsch H."/>
            <person name="Baudin F."/>
            <person name="Bateman A."/>
            <person name="Muller C.W."/>
        </authorList>
    </citation>
    <scope>STRUCTURE BY ELECTRON MICROSCOPY (2.80 ANGSTROMS)</scope>
    <scope>SUBUNIT</scope>
</reference>
<reference key="27">
    <citation type="journal article" date="2021" name="Nat. Struct. Mol. Biol.">
        <title>Structural insights into transcriptional regulation of human RNA polymerase III.</title>
        <authorList>
            <person name="Wang Q."/>
            <person name="Li S."/>
            <person name="Wan F."/>
            <person name="Xu Y."/>
            <person name="Wu Z."/>
            <person name="Cao M."/>
            <person name="Lan P."/>
            <person name="Lei M."/>
            <person name="Wu J."/>
        </authorList>
    </citation>
    <scope>STRUCTURE BY ELECTRON MICROSCOPY (2.90 ANGSTROMS)</scope>
    <scope>SUBUNIT</scope>
</reference>
<keyword id="KW-0002">3D-structure</keyword>
<keyword id="KW-0025">Alternative splicing</keyword>
<keyword id="KW-0051">Antiviral defense</keyword>
<keyword id="KW-0240">DNA-directed RNA polymerase</keyword>
<keyword id="KW-0391">Immunity</keyword>
<keyword id="KW-0399">Innate immunity</keyword>
<keyword id="KW-1017">Isopeptide bond</keyword>
<keyword id="KW-0539">Nucleus</keyword>
<keyword id="KW-0597">Phosphoprotein</keyword>
<keyword id="KW-1267">Proteomics identification</keyword>
<keyword id="KW-1185">Reference proteome</keyword>
<keyword id="KW-0804">Transcription</keyword>
<keyword id="KW-0832">Ubl conjugation</keyword>
<evidence type="ECO:0000250" key="1">
    <source>
        <dbReference type="UniProtKB" id="P36121"/>
    </source>
</evidence>
<evidence type="ECO:0000256" key="2">
    <source>
        <dbReference type="SAM" id="MobiDB-lite"/>
    </source>
</evidence>
<evidence type="ECO:0000269" key="3">
    <source>
    </source>
</evidence>
<evidence type="ECO:0000269" key="4">
    <source>
    </source>
</evidence>
<evidence type="ECO:0000269" key="5">
    <source>
    </source>
</evidence>
<evidence type="ECO:0000269" key="6">
    <source>
    </source>
</evidence>
<evidence type="ECO:0000269" key="7">
    <source>
    </source>
</evidence>
<evidence type="ECO:0000269" key="8">
    <source>
    </source>
</evidence>
<evidence type="ECO:0000269" key="9">
    <source>
    </source>
</evidence>
<evidence type="ECO:0000269" key="10">
    <source>
    </source>
</evidence>
<evidence type="ECO:0000269" key="11">
    <source>
    </source>
</evidence>
<evidence type="ECO:0000269" key="12">
    <source>
    </source>
</evidence>
<evidence type="ECO:0000303" key="13">
    <source>
    </source>
</evidence>
<evidence type="ECO:0000303" key="14">
    <source>
    </source>
</evidence>
<evidence type="ECO:0000303" key="15">
    <source>
    </source>
</evidence>
<evidence type="ECO:0000305" key="16"/>
<evidence type="ECO:0000312" key="17">
    <source>
        <dbReference type="HGNC" id="HGNC:30347"/>
    </source>
</evidence>
<evidence type="ECO:0007744" key="18">
    <source>
    </source>
</evidence>
<evidence type="ECO:0007744" key="19">
    <source>
    </source>
</evidence>
<evidence type="ECO:0007744" key="20">
    <source>
    </source>
</evidence>
<evidence type="ECO:0007744" key="21">
    <source>
    </source>
</evidence>
<evidence type="ECO:0007744" key="22">
    <source>
    </source>
</evidence>
<evidence type="ECO:0007744" key="23">
    <source>
    </source>
</evidence>
<evidence type="ECO:0007744" key="24">
    <source>
    </source>
</evidence>
<evidence type="ECO:0007744" key="25">
    <source>
    </source>
</evidence>
<evidence type="ECO:0007744" key="26">
    <source>
    </source>
</evidence>
<evidence type="ECO:0007744" key="27">
    <source>
    </source>
</evidence>
<evidence type="ECO:0007829" key="28">
    <source>
        <dbReference type="PDB" id="7A6H"/>
    </source>
</evidence>
<evidence type="ECO:0007829" key="29">
    <source>
        <dbReference type="PDB" id="7AE1"/>
    </source>
</evidence>
<evidence type="ECO:0007829" key="30">
    <source>
        <dbReference type="PDB" id="7AE3"/>
    </source>
</evidence>
<evidence type="ECO:0007829" key="31">
    <source>
        <dbReference type="PDB" id="7AEA"/>
    </source>
</evidence>
<evidence type="ECO:0007829" key="32">
    <source>
        <dbReference type="PDB" id="7ASU"/>
    </source>
</evidence>
<evidence type="ECO:0007829" key="33">
    <source>
        <dbReference type="PDB" id="7ASV"/>
    </source>
</evidence>
<evidence type="ECO:0007829" key="34">
    <source>
        <dbReference type="PDB" id="7D58"/>
    </source>
</evidence>
<evidence type="ECO:0007829" key="35">
    <source>
        <dbReference type="PDB" id="7D59"/>
    </source>
</evidence>
<evidence type="ECO:0007829" key="36">
    <source>
        <dbReference type="PDB" id="8IUH"/>
    </source>
</evidence>
<comment type="function">
    <text evidence="1 3 4 5 6 12">DNA-dependent RNA polymerase catalyzes the transcription of DNA into RNA using the four ribonucleoside triphosphates as substrates (PubMed:12391170, PubMed:20413673, PubMed:35637192). Specific peripheric component of RNA polymerase III (Pol III) which synthesizes small non-coding RNAs including 5S rRNA, snRNAs, tRNAs and miRNAs from at least 500 distinct genomic loci. Assembles with POLR3D/RPC4 forming a subcomplex that binds the Pol III core. Enables recruitment of Pol III at transcription initiation site and drives transcription initiation from both type 2 and type 3 DNA promoters. Required for efficient transcription termination and reinitiation (By similarity) (PubMed:12391170, PubMed:20413673, PubMed:35637192). Plays a key role in sensing and limiting infection by intracellular bacteria and DNA viruses. Acts as a nuclear and cytosolic DNA sensor involved in innate immune response. Can sense non-self dsDNA that serves as template for transcription into dsRNA. The non-self RNA polymerase III transcripts, such as Epstein-Barr virus-encoded RNAs (EBERs) induce type I interferon and NF-kappa-B through the RIG-I pathway (PubMed:19609254, PubMed:19631370).</text>
</comment>
<comment type="subunit">
    <text evidence="3 7 8 9 10 11 12">Component of the RNA polymerase III complex consisting of at least 17 subunits: a ten-subunit horseshoe-shaped catalytic core composed of POLR3A/RPC1, POLR3B/RPC2, POLR1C/RPAC1, POLR1D/RPAC2, POLR3K/RPC10, POLR2E/RPABC1, POLR2F/RPABC2, POLR2H/RPABC3, POLR2K/RPABC4 and POLR2L/RPABC5; the stalk composed of two subunits POLR3H/RPC8 and CRCP/RPC9, forming a structural mobile part that protrudes out of the core and functions primarily in transcription initiation; and additional subunits homologous to general transcription factors of the RNA polymerase II machinery, POLR3D/RPC4-POLR3E/RPC5 heterodimer and POLR3/CRPC3-POLR3F/RPC6-POLR3G/RPC7 heterotrimer.</text>
</comment>
<comment type="subcellular location">
    <subcellularLocation>
        <location evidence="7">Nucleus</location>
    </subcellularLocation>
</comment>
<comment type="alternative products">
    <event type="alternative splicing"/>
    <isoform>
        <id>Q9NVU0-1</id>
        <name>1</name>
        <sequence type="displayed"/>
    </isoform>
    <isoform>
        <id>Q9NVU0-2</id>
        <name>2</name>
        <sequence type="described" ref="VSP_007065"/>
    </isoform>
    <isoform>
        <id>Q9NVU0-3</id>
        <name>3</name>
        <sequence type="described" ref="VSP_007064"/>
    </isoform>
    <isoform>
        <id>Q9NVU0-4</id>
        <name>4</name>
        <sequence type="described" ref="VSP_044710"/>
    </isoform>
    <isoform>
        <id>Q9NVU0-5</id>
        <name>5</name>
        <sequence type="described" ref="VSP_046374"/>
    </isoform>
</comment>
<comment type="miscellaneous">
    <molecule>Isoform 3</molecule>
    <text evidence="16">May result from the retention of an intron in the cDNA.</text>
</comment>
<comment type="sequence caution" evidence="16">
    <conflict type="erroneous initiation">
        <sequence resource="EMBL-CDS" id="BAA95976"/>
    </conflict>
</comment>
<comment type="sequence caution" evidence="16">
    <conflict type="erroneous initiation">
        <sequence resource="EMBL-CDS" id="BAB14481"/>
    </conflict>
</comment>
<feature type="chain" id="PRO_0000073970" description="DNA-directed RNA polymerase III subunit RPC5">
    <location>
        <begin position="1"/>
        <end position="708"/>
    </location>
</feature>
<feature type="region of interest" description="Disordered" evidence="2">
    <location>
        <begin position="146"/>
        <end position="170"/>
    </location>
</feature>
<feature type="region of interest" description="Disordered" evidence="2">
    <location>
        <begin position="485"/>
        <end position="552"/>
    </location>
</feature>
<feature type="region of interest" description="Required for Pol III complex stability" evidence="7">
    <location>
        <begin position="556"/>
        <end position="708"/>
    </location>
</feature>
<feature type="compositionally biased region" description="Basic and acidic residues" evidence="2">
    <location>
        <begin position="146"/>
        <end position="155"/>
    </location>
</feature>
<feature type="compositionally biased region" description="Acidic residues" evidence="2">
    <location>
        <begin position="502"/>
        <end position="519"/>
    </location>
</feature>
<feature type="modified residue" description="Phosphoserine" evidence="19 20 22">
    <location>
        <position position="161"/>
    </location>
</feature>
<feature type="modified residue" description="Phosphoserine" evidence="20 22">
    <location>
        <position position="162"/>
    </location>
</feature>
<feature type="modified residue" description="Phosphoserine" evidence="21">
    <location>
        <position position="192"/>
    </location>
</feature>
<feature type="modified residue" description="Phosphotyrosine" evidence="19">
    <location>
        <position position="224"/>
    </location>
</feature>
<feature type="modified residue" description="Phosphoserine" evidence="18 19 20 21">
    <location>
        <position position="503"/>
    </location>
</feature>
<feature type="modified residue" description="Phosphoserine" evidence="18">
    <location>
        <position position="522"/>
    </location>
</feature>
<feature type="cross-link" description="Glycyl lysine isopeptide (Lys-Gly) (interchain with G-Cter in SUMO2)" evidence="27">
    <location>
        <position position="171"/>
    </location>
</feature>
<feature type="cross-link" description="Glycyl lysine isopeptide (Lys-Gly) (interchain with G-Cter in SUMO2)" evidence="27">
    <location>
        <position position="432"/>
    </location>
</feature>
<feature type="cross-link" description="Glycyl lysine isopeptide (Lys-Gly) (interchain with G-Cter in SUMO1); alternate" evidence="23">
    <location>
        <position position="498"/>
    </location>
</feature>
<feature type="cross-link" description="Glycyl lysine isopeptide (Lys-Gly) (interchain with G-Cter in SUMO2); alternate" evidence="23 24 27">
    <location>
        <position position="498"/>
    </location>
</feature>
<feature type="cross-link" description="Glycyl lysine isopeptide (Lys-Gly) (interchain with G-Cter in SUMO2)" evidence="24 25 26 27">
    <location>
        <position position="659"/>
    </location>
</feature>
<feature type="splice variant" id="VSP_046374" description="In isoform 5." evidence="14">
    <location>
        <begin position="13"/>
        <end position="48"/>
    </location>
</feature>
<feature type="splice variant" id="VSP_007064" description="In isoform 3." evidence="13">
    <original>FPPQTAASPDEQKVFALWESGDMSDQHRQVLLEIFSKNYRVRRNMIQSRLTQECGEDLSKQEVDKVLKDCCVSYGGMWYLKGTVQS</original>
    <variation>VSRALPARGMGGGGWGEPAVGRPRGDTGGHAW</variation>
    <location>
        <begin position="623"/>
        <end position="708"/>
    </location>
</feature>
<feature type="splice variant" id="VSP_044710" description="In isoform 4." evidence="14">
    <location>
        <begin position="648"/>
        <end position="668"/>
    </location>
</feature>
<feature type="splice variant" id="VSP_007065" description="In isoform 2." evidence="14 15">
    <location>
        <begin position="649"/>
        <end position="690"/>
    </location>
</feature>
<feature type="sequence variant" id="VAR_024623" description="In dbSNP:rs2347.">
    <original>S</original>
    <variation>A</variation>
    <location>
        <position position="46"/>
    </location>
</feature>
<feature type="sequence conflict" description="In Ref. 2; BAB14437." evidence="16" ref="2">
    <original>D</original>
    <variation>N</variation>
    <location>
        <position position="14"/>
    </location>
</feature>
<feature type="sequence conflict" description="In Ref. 3; BAG62408." evidence="16" ref="3">
    <original>N</original>
    <variation>D</variation>
    <location>
        <position position="80"/>
    </location>
</feature>
<feature type="sequence conflict" description="In Ref. 2; BAB14437." evidence="16" ref="2">
    <original>K</original>
    <variation>E</variation>
    <location>
        <position position="148"/>
    </location>
</feature>
<feature type="sequence conflict" description="In Ref. 1; AAM18215." evidence="16" ref="1">
    <original>K</original>
    <variation>Q</variation>
    <location>
        <position position="316"/>
    </location>
</feature>
<feature type="helix" evidence="34">
    <location>
        <begin position="4"/>
        <end position="6"/>
    </location>
</feature>
<feature type="strand" evidence="29">
    <location>
        <begin position="10"/>
        <end position="17"/>
    </location>
</feature>
<feature type="turn" evidence="29">
    <location>
        <begin position="20"/>
        <end position="24"/>
    </location>
</feature>
<feature type="strand" evidence="29">
    <location>
        <begin position="25"/>
        <end position="34"/>
    </location>
</feature>
<feature type="strand" evidence="34">
    <location>
        <begin position="39"/>
        <end position="42"/>
    </location>
</feature>
<feature type="strand" evidence="29">
    <location>
        <begin position="44"/>
        <end position="49"/>
    </location>
</feature>
<feature type="turn" evidence="29">
    <location>
        <begin position="51"/>
        <end position="54"/>
    </location>
</feature>
<feature type="strand" evidence="29">
    <location>
        <begin position="57"/>
        <end position="61"/>
    </location>
</feature>
<feature type="strand" evidence="29">
    <location>
        <begin position="64"/>
        <end position="66"/>
    </location>
</feature>
<feature type="helix" evidence="29">
    <location>
        <begin position="71"/>
        <end position="81"/>
    </location>
</feature>
<feature type="strand" evidence="29">
    <location>
        <begin position="93"/>
        <end position="96"/>
    </location>
</feature>
<feature type="strand" evidence="29">
    <location>
        <begin position="99"/>
        <end position="106"/>
    </location>
</feature>
<feature type="strand" evidence="29">
    <location>
        <begin position="114"/>
        <end position="120"/>
    </location>
</feature>
<feature type="strand" evidence="29">
    <location>
        <begin position="123"/>
        <end position="128"/>
    </location>
</feature>
<feature type="strand" evidence="29">
    <location>
        <begin position="130"/>
        <end position="137"/>
    </location>
</feature>
<feature type="helix" evidence="29">
    <location>
        <begin position="140"/>
        <end position="153"/>
    </location>
</feature>
<feature type="strand" evidence="36">
    <location>
        <begin position="161"/>
        <end position="163"/>
    </location>
</feature>
<feature type="helix" evidence="36">
    <location>
        <begin position="183"/>
        <end position="190"/>
    </location>
</feature>
<feature type="helix" evidence="29">
    <location>
        <begin position="193"/>
        <end position="200"/>
    </location>
</feature>
<feature type="strand" evidence="30">
    <location>
        <begin position="201"/>
        <end position="203"/>
    </location>
</feature>
<feature type="strand" evidence="29">
    <location>
        <begin position="206"/>
        <end position="211"/>
    </location>
</feature>
<feature type="strand" evidence="28">
    <location>
        <begin position="213"/>
        <end position="215"/>
    </location>
</feature>
<feature type="helix" evidence="29">
    <location>
        <begin position="216"/>
        <end position="221"/>
    </location>
</feature>
<feature type="helix" evidence="29">
    <location>
        <begin position="222"/>
        <end position="225"/>
    </location>
</feature>
<feature type="helix" evidence="29">
    <location>
        <begin position="242"/>
        <end position="249"/>
    </location>
</feature>
<feature type="helix" evidence="36">
    <location>
        <begin position="265"/>
        <end position="267"/>
    </location>
</feature>
<feature type="helix" evidence="32">
    <location>
        <begin position="270"/>
        <end position="273"/>
    </location>
</feature>
<feature type="strand" evidence="29">
    <location>
        <begin position="274"/>
        <end position="276"/>
    </location>
</feature>
<feature type="helix" evidence="32">
    <location>
        <begin position="278"/>
        <end position="288"/>
    </location>
</feature>
<feature type="strand" evidence="29">
    <location>
        <begin position="289"/>
        <end position="292"/>
    </location>
</feature>
<feature type="helix" evidence="32">
    <location>
        <begin position="294"/>
        <end position="301"/>
    </location>
</feature>
<feature type="strand" evidence="31">
    <location>
        <begin position="303"/>
        <end position="305"/>
    </location>
</feature>
<feature type="helix" evidence="32">
    <location>
        <begin position="307"/>
        <end position="317"/>
    </location>
</feature>
<feature type="strand" evidence="32">
    <location>
        <begin position="318"/>
        <end position="321"/>
    </location>
</feature>
<feature type="strand" evidence="32">
    <location>
        <begin position="324"/>
        <end position="327"/>
    </location>
</feature>
<feature type="helix" evidence="32">
    <location>
        <begin position="329"/>
        <end position="332"/>
    </location>
</feature>
<feature type="strand" evidence="29">
    <location>
        <begin position="340"/>
        <end position="344"/>
    </location>
</feature>
<feature type="helix" evidence="32">
    <location>
        <begin position="346"/>
        <end position="362"/>
    </location>
</feature>
<feature type="strand" evidence="32">
    <location>
        <begin position="364"/>
        <end position="366"/>
    </location>
</feature>
<feature type="helix" evidence="32">
    <location>
        <begin position="368"/>
        <end position="375"/>
    </location>
</feature>
<feature type="helix" evidence="32">
    <location>
        <begin position="379"/>
        <end position="387"/>
    </location>
</feature>
<feature type="strand" evidence="32">
    <location>
        <begin position="390"/>
        <end position="393"/>
    </location>
</feature>
<feature type="turn" evidence="32">
    <location>
        <begin position="394"/>
        <end position="396"/>
    </location>
</feature>
<feature type="strand" evidence="32">
    <location>
        <begin position="397"/>
        <end position="402"/>
    </location>
</feature>
<feature type="helix" evidence="32">
    <location>
        <begin position="406"/>
        <end position="411"/>
    </location>
</feature>
<feature type="helix" evidence="32">
    <location>
        <begin position="413"/>
        <end position="433"/>
    </location>
</feature>
<feature type="helix" evidence="33">
    <location>
        <begin position="559"/>
        <end position="573"/>
    </location>
</feature>
<feature type="strand" evidence="33">
    <location>
        <begin position="574"/>
        <end position="577"/>
    </location>
</feature>
<feature type="helix" evidence="33">
    <location>
        <begin position="578"/>
        <end position="591"/>
    </location>
</feature>
<feature type="helix" evidence="33">
    <location>
        <begin position="597"/>
        <end position="599"/>
    </location>
</feature>
<feature type="helix" evidence="33">
    <location>
        <begin position="604"/>
        <end position="613"/>
    </location>
</feature>
<feature type="strand" evidence="33">
    <location>
        <begin position="616"/>
        <end position="619"/>
    </location>
</feature>
<feature type="helix" evidence="33">
    <location>
        <begin position="631"/>
        <end position="634"/>
    </location>
</feature>
<feature type="strand" evidence="33">
    <location>
        <begin position="636"/>
        <end position="639"/>
    </location>
</feature>
<feature type="helix" evidence="33">
    <location>
        <begin position="646"/>
        <end position="657"/>
    </location>
</feature>
<feature type="strand" evidence="33">
    <location>
        <begin position="661"/>
        <end position="663"/>
    </location>
</feature>
<feature type="helix" evidence="33">
    <location>
        <begin position="665"/>
        <end position="676"/>
    </location>
</feature>
<feature type="helix" evidence="33">
    <location>
        <begin position="682"/>
        <end position="692"/>
    </location>
</feature>
<feature type="strand" evidence="33">
    <location>
        <begin position="693"/>
        <end position="696"/>
    </location>
</feature>
<feature type="strand" evidence="33">
    <location>
        <begin position="699"/>
        <end position="702"/>
    </location>
</feature>
<feature type="strand" evidence="35">
    <location>
        <begin position="706"/>
        <end position="708"/>
    </location>
</feature>
<gene>
    <name evidence="17" type="primary">POLR3E</name>
    <name type="synonym">KIAA1452</name>
</gene>
<dbReference type="EMBL" id="AY092085">
    <property type="protein sequence ID" value="AAM18215.1"/>
    <property type="molecule type" value="mRNA"/>
</dbReference>
<dbReference type="EMBL" id="AB040885">
    <property type="protein sequence ID" value="BAA95976.1"/>
    <property type="status" value="ALT_INIT"/>
    <property type="molecule type" value="mRNA"/>
</dbReference>
<dbReference type="EMBL" id="AK001371">
    <property type="protein sequence ID" value="BAA91655.1"/>
    <property type="molecule type" value="mRNA"/>
</dbReference>
<dbReference type="EMBL" id="AK023160">
    <property type="protein sequence ID" value="BAB14437.1"/>
    <property type="molecule type" value="mRNA"/>
</dbReference>
<dbReference type="EMBL" id="AK023231">
    <property type="protein sequence ID" value="BAB14481.1"/>
    <property type="status" value="ALT_INIT"/>
    <property type="molecule type" value="mRNA"/>
</dbReference>
<dbReference type="EMBL" id="AK296813">
    <property type="protein sequence ID" value="BAG59386.1"/>
    <property type="molecule type" value="mRNA"/>
</dbReference>
<dbReference type="EMBL" id="AK300735">
    <property type="protein sequence ID" value="BAG62408.1"/>
    <property type="molecule type" value="mRNA"/>
</dbReference>
<dbReference type="EMBL" id="AC009034">
    <property type="status" value="NOT_ANNOTATED_CDS"/>
    <property type="molecule type" value="Genomic_DNA"/>
</dbReference>
<dbReference type="EMBL" id="AC092338">
    <property type="status" value="NOT_ANNOTATED_CDS"/>
    <property type="molecule type" value="Genomic_DNA"/>
</dbReference>
<dbReference type="EMBL" id="BC000285">
    <property type="protein sequence ID" value="AAH00285.1"/>
    <property type="molecule type" value="mRNA"/>
</dbReference>
<dbReference type="CCDS" id="CCDS10605.1">
    <molecule id="Q9NVU0-1"/>
</dbReference>
<dbReference type="CCDS" id="CCDS58432.1">
    <molecule id="Q9NVU0-4"/>
</dbReference>
<dbReference type="CCDS" id="CCDS58433.1">
    <molecule id="Q9NVU0-2"/>
</dbReference>
<dbReference type="CCDS" id="CCDS58434.1">
    <molecule id="Q9NVU0-5"/>
</dbReference>
<dbReference type="RefSeq" id="NP_001244962.1">
    <molecule id="Q9NVU0-4"/>
    <property type="nucleotide sequence ID" value="NM_001258033.2"/>
</dbReference>
<dbReference type="RefSeq" id="NP_001244963.1">
    <molecule id="Q9NVU0-5"/>
    <property type="nucleotide sequence ID" value="NM_001258034.2"/>
</dbReference>
<dbReference type="RefSeq" id="NP_001244964.1">
    <property type="nucleotide sequence ID" value="NM_001258035.1"/>
</dbReference>
<dbReference type="RefSeq" id="NP_001244965.1">
    <molecule id="Q9NVU0-2"/>
    <property type="nucleotide sequence ID" value="NM_001258036.2"/>
</dbReference>
<dbReference type="RefSeq" id="NP_060589.1">
    <molecule id="Q9NVU0-1"/>
    <property type="nucleotide sequence ID" value="NM_018119.4"/>
</dbReference>
<dbReference type="RefSeq" id="XP_006721126.1">
    <property type="nucleotide sequence ID" value="XM_006721063.2"/>
</dbReference>
<dbReference type="RefSeq" id="XP_006726676.1">
    <property type="nucleotide sequence ID" value="XM_006726613.1"/>
</dbReference>
<dbReference type="RefSeq" id="XP_047290318.1">
    <molecule id="Q9NVU0-1"/>
    <property type="nucleotide sequence ID" value="XM_047434362.1"/>
</dbReference>
<dbReference type="PDB" id="7A6H">
    <property type="method" value="EM"/>
    <property type="resolution" value="3.30 A"/>
    <property type="chains" value="M=1-708"/>
</dbReference>
<dbReference type="PDB" id="7AE1">
    <property type="method" value="EM"/>
    <property type="resolution" value="2.80 A"/>
    <property type="chains" value="M=1-708"/>
</dbReference>
<dbReference type="PDB" id="7AE3">
    <property type="method" value="EM"/>
    <property type="resolution" value="3.10 A"/>
    <property type="chains" value="M=1-708"/>
</dbReference>
<dbReference type="PDB" id="7AEA">
    <property type="method" value="EM"/>
    <property type="resolution" value="3.40 A"/>
    <property type="chains" value="M=1-708"/>
</dbReference>
<dbReference type="PDB" id="7AST">
    <property type="method" value="EM"/>
    <property type="resolution" value="4.00 A"/>
    <property type="chains" value="K=1-708"/>
</dbReference>
<dbReference type="PDB" id="7ASU">
    <property type="method" value="X-ray"/>
    <property type="resolution" value="2.23 A"/>
    <property type="chains" value="A=1-708"/>
</dbReference>
<dbReference type="PDB" id="7ASV">
    <property type="method" value="X-ray"/>
    <property type="resolution" value="1.55 A"/>
    <property type="chains" value="A/B=1-708"/>
</dbReference>
<dbReference type="PDB" id="7D58">
    <property type="method" value="EM"/>
    <property type="resolution" value="2.90 A"/>
    <property type="chains" value="M=1-708"/>
</dbReference>
<dbReference type="PDB" id="7D59">
    <property type="method" value="EM"/>
    <property type="resolution" value="3.10 A"/>
    <property type="chains" value="M=1-708"/>
</dbReference>
<dbReference type="PDB" id="7DN3">
    <property type="method" value="EM"/>
    <property type="resolution" value="3.50 A"/>
    <property type="chains" value="M=1-708"/>
</dbReference>
<dbReference type="PDB" id="7DU2">
    <property type="method" value="EM"/>
    <property type="resolution" value="3.35 A"/>
    <property type="chains" value="M=1-708"/>
</dbReference>
<dbReference type="PDB" id="7FJI">
    <property type="method" value="EM"/>
    <property type="resolution" value="3.60 A"/>
    <property type="chains" value="M=1-708"/>
</dbReference>
<dbReference type="PDB" id="7FJJ">
    <property type="method" value="EM"/>
    <property type="resolution" value="3.60 A"/>
    <property type="chains" value="M=1-708"/>
</dbReference>
<dbReference type="PDB" id="8ITY">
    <property type="method" value="EM"/>
    <property type="resolution" value="3.90 A"/>
    <property type="chains" value="M=1-708"/>
</dbReference>
<dbReference type="PDB" id="8IUE">
    <property type="method" value="EM"/>
    <property type="resolution" value="4.10 A"/>
    <property type="chains" value="M=1-708"/>
</dbReference>
<dbReference type="PDB" id="8IUH">
    <property type="method" value="EM"/>
    <property type="resolution" value="3.40 A"/>
    <property type="chains" value="M=1-708"/>
</dbReference>
<dbReference type="PDB" id="9FSO">
    <property type="method" value="EM"/>
    <property type="resolution" value="3.28 A"/>
    <property type="chains" value="E=1-708"/>
</dbReference>
<dbReference type="PDB" id="9FSP">
    <property type="method" value="EM"/>
    <property type="resolution" value="3.39 A"/>
    <property type="chains" value="E=1-708"/>
</dbReference>
<dbReference type="PDB" id="9FSQ">
    <property type="method" value="EM"/>
    <property type="resolution" value="3.51 A"/>
    <property type="chains" value="E=1-708"/>
</dbReference>
<dbReference type="PDB" id="9FSR">
    <property type="method" value="EM"/>
    <property type="resolution" value="3.76 A"/>
    <property type="chains" value="E=1-708"/>
</dbReference>
<dbReference type="PDB" id="9FSS">
    <property type="method" value="EM"/>
    <property type="resolution" value="4.14 A"/>
    <property type="chains" value="E=1-708"/>
</dbReference>
<dbReference type="PDBsum" id="7A6H"/>
<dbReference type="PDBsum" id="7AE1"/>
<dbReference type="PDBsum" id="7AE3"/>
<dbReference type="PDBsum" id="7AEA"/>
<dbReference type="PDBsum" id="7AST"/>
<dbReference type="PDBsum" id="7ASU"/>
<dbReference type="PDBsum" id="7ASV"/>
<dbReference type="PDBsum" id="7D58"/>
<dbReference type="PDBsum" id="7D59"/>
<dbReference type="PDBsum" id="7DN3"/>
<dbReference type="PDBsum" id="7DU2"/>
<dbReference type="PDBsum" id="7FJI"/>
<dbReference type="PDBsum" id="7FJJ"/>
<dbReference type="PDBsum" id="8ITY"/>
<dbReference type="PDBsum" id="8IUE"/>
<dbReference type="PDBsum" id="8IUH"/>
<dbReference type="PDBsum" id="9FSO"/>
<dbReference type="PDBsum" id="9FSP"/>
<dbReference type="PDBsum" id="9FSQ"/>
<dbReference type="PDBsum" id="9FSR"/>
<dbReference type="PDBsum" id="9FSS"/>
<dbReference type="EMDB" id="EMD-11673"/>
<dbReference type="EMDB" id="EMD-11736"/>
<dbReference type="EMDB" id="EMD-11738"/>
<dbReference type="EMDB" id="EMD-11742"/>
<dbReference type="EMDB" id="EMD-11904"/>
<dbReference type="EMDB" id="EMD-30577"/>
<dbReference type="EMDB" id="EMD-30578"/>
<dbReference type="EMDB" id="EMD-30779"/>
<dbReference type="EMDB" id="EMD-30865"/>
<dbReference type="EMDB" id="EMD-31621"/>
<dbReference type="EMDB" id="EMD-31622"/>
<dbReference type="EMDB" id="EMD-35712"/>
<dbReference type="EMDB" id="EMD-35719"/>
<dbReference type="EMDB" id="EMD-35722"/>
<dbReference type="EMDB" id="EMD-50730"/>
<dbReference type="EMDB" id="EMD-50731"/>
<dbReference type="EMDB" id="EMD-50732"/>
<dbReference type="EMDB" id="EMD-50733"/>
<dbReference type="EMDB" id="EMD-50734"/>
<dbReference type="SMR" id="Q9NVU0"/>
<dbReference type="BioGRID" id="120840">
    <property type="interactions" value="110"/>
</dbReference>
<dbReference type="BioGRID" id="3190820">
    <property type="interactions" value="9"/>
</dbReference>
<dbReference type="ComplexPortal" id="CPX-2393">
    <property type="entry name" value="DNA-directed RNA polymerase III complex, POLR3G variant"/>
</dbReference>
<dbReference type="ComplexPortal" id="CPX-7482">
    <property type="entry name" value="DNA-directed RNA polymerase III complex, POLR3GL variant"/>
</dbReference>
<dbReference type="CORUM" id="Q9NVU0"/>
<dbReference type="FunCoup" id="Q9NVU0">
    <property type="interactions" value="3729"/>
</dbReference>
<dbReference type="IntAct" id="Q9NVU0">
    <property type="interactions" value="75"/>
</dbReference>
<dbReference type="MINT" id="Q9NVU0"/>
<dbReference type="STRING" id="9606.ENSP00000299853"/>
<dbReference type="GlyGen" id="Q9NVU0">
    <property type="glycosylation" value="2 sites, 1 N-linked glycan (1 site), 1 O-linked glycan (1 site)"/>
</dbReference>
<dbReference type="iPTMnet" id="Q9NVU0"/>
<dbReference type="PhosphoSitePlus" id="Q9NVU0"/>
<dbReference type="BioMuta" id="POLR3E"/>
<dbReference type="DMDM" id="29428028"/>
<dbReference type="jPOST" id="Q9NVU0"/>
<dbReference type="MassIVE" id="Q9NVU0"/>
<dbReference type="PaxDb" id="9606-ENSP00000299853"/>
<dbReference type="PeptideAtlas" id="Q9NVU0"/>
<dbReference type="ProteomicsDB" id="42503"/>
<dbReference type="ProteomicsDB" id="4504"/>
<dbReference type="ProteomicsDB" id="82857">
    <molecule id="Q9NVU0-1"/>
</dbReference>
<dbReference type="ProteomicsDB" id="82858">
    <molecule id="Q9NVU0-2"/>
</dbReference>
<dbReference type="ProteomicsDB" id="82859">
    <molecule id="Q9NVU0-3"/>
</dbReference>
<dbReference type="Pumba" id="Q9NVU0"/>
<dbReference type="Antibodypedia" id="25851">
    <property type="antibodies" value="127 antibodies from 23 providers"/>
</dbReference>
<dbReference type="DNASU" id="55718"/>
<dbReference type="Ensembl" id="ENST00000299853.10">
    <molecule id="Q9NVU0-1"/>
    <property type="protein sequence ID" value="ENSP00000299853.5"/>
    <property type="gene ID" value="ENSG00000058600.16"/>
</dbReference>
<dbReference type="Ensembl" id="ENST00000359210.8">
    <molecule id="Q9NVU0-2"/>
    <property type="protein sequence ID" value="ENSP00000352140.4"/>
    <property type="gene ID" value="ENSG00000058600.16"/>
</dbReference>
<dbReference type="Ensembl" id="ENST00000418581.6">
    <molecule id="Q9NVU0-5"/>
    <property type="protein sequence ID" value="ENSP00000399254.2"/>
    <property type="gene ID" value="ENSG00000058600.16"/>
</dbReference>
<dbReference type="Ensembl" id="ENST00000564209.5">
    <molecule id="Q9NVU0-4"/>
    <property type="protein sequence ID" value="ENSP00000456967.1"/>
    <property type="gene ID" value="ENSG00000058600.16"/>
</dbReference>
<dbReference type="Ensembl" id="ENST00000639550.2">
    <molecule id="Q9NVU0-1"/>
    <property type="protein sequence ID" value="ENSP00000492514.2"/>
    <property type="gene ID" value="ENSG00000284282.3"/>
</dbReference>
<dbReference type="Ensembl" id="ENST00000640588.2">
    <molecule id="Q9NVU0-1"/>
    <property type="protein sequence ID" value="ENSP00000492263.1"/>
    <property type="gene ID" value="ENSG00000284282.3"/>
</dbReference>
<dbReference type="GeneID" id="55718"/>
<dbReference type="KEGG" id="hsa:55718"/>
<dbReference type="MANE-Select" id="ENST00000299853.10">
    <property type="protein sequence ID" value="ENSP00000299853.5"/>
    <property type="RefSeq nucleotide sequence ID" value="NM_018119.4"/>
    <property type="RefSeq protein sequence ID" value="NP_060589.1"/>
</dbReference>
<dbReference type="UCSC" id="uc002dkk.5">
    <molecule id="Q9NVU0-1"/>
    <property type="organism name" value="human"/>
</dbReference>
<dbReference type="AGR" id="HGNC:30347"/>
<dbReference type="CTD" id="55718"/>
<dbReference type="DisGeNET" id="55718"/>
<dbReference type="GeneCards" id="POLR3E"/>
<dbReference type="HGNC" id="HGNC:30347">
    <property type="gene designation" value="POLR3E"/>
</dbReference>
<dbReference type="HPA" id="ENSG00000058600">
    <property type="expression patterns" value="Tissue enhanced (skeletal)"/>
</dbReference>
<dbReference type="MIM" id="617815">
    <property type="type" value="gene"/>
</dbReference>
<dbReference type="neXtProt" id="NX_Q9NVU0"/>
<dbReference type="OpenTargets" id="ENSG00000058600"/>
<dbReference type="PharmGKB" id="PA134964025"/>
<dbReference type="VEuPathDB" id="HostDB:ENSG00000058600"/>
<dbReference type="eggNOG" id="KOG2354">
    <property type="taxonomic scope" value="Eukaryota"/>
</dbReference>
<dbReference type="GeneTree" id="ENSGT00390000016123"/>
<dbReference type="HOGENOM" id="CLU_021012_1_0_1"/>
<dbReference type="InParanoid" id="Q9NVU0"/>
<dbReference type="OMA" id="KSTCSPH"/>
<dbReference type="OrthoDB" id="340681at2759"/>
<dbReference type="PAN-GO" id="Q9NVU0">
    <property type="GO annotations" value="1 GO annotation based on evolutionary models"/>
</dbReference>
<dbReference type="PhylomeDB" id="Q9NVU0"/>
<dbReference type="TreeFam" id="TF103050"/>
<dbReference type="PathwayCommons" id="Q9NVU0"/>
<dbReference type="Reactome" id="R-HSA-1834949">
    <property type="pathway name" value="Cytosolic sensors of pathogen-associated DNA"/>
</dbReference>
<dbReference type="Reactome" id="R-HSA-73780">
    <property type="pathway name" value="RNA Polymerase III Chain Elongation"/>
</dbReference>
<dbReference type="Reactome" id="R-HSA-73980">
    <property type="pathway name" value="RNA Polymerase III Transcription Termination"/>
</dbReference>
<dbReference type="Reactome" id="R-HSA-749476">
    <property type="pathway name" value="RNA Polymerase III Abortive And Retractive Initiation"/>
</dbReference>
<dbReference type="Reactome" id="R-HSA-76061">
    <property type="pathway name" value="RNA Polymerase III Transcription Initiation From Type 1 Promoter"/>
</dbReference>
<dbReference type="Reactome" id="R-HSA-76066">
    <property type="pathway name" value="RNA Polymerase III Transcription Initiation From Type 2 Promoter"/>
</dbReference>
<dbReference type="Reactome" id="R-HSA-76071">
    <property type="pathway name" value="RNA Polymerase III Transcription Initiation From Type 3 Promoter"/>
</dbReference>
<dbReference type="SignaLink" id="Q9NVU0"/>
<dbReference type="SIGNOR" id="Q9NVU0"/>
<dbReference type="BioGRID-ORCS" id="55718">
    <property type="hits" value="733 hits in 1163 CRISPR screens"/>
</dbReference>
<dbReference type="ChiTaRS" id="POLR3E">
    <property type="organism name" value="human"/>
</dbReference>
<dbReference type="GeneWiki" id="POLR3E"/>
<dbReference type="Pharos" id="Q9NVU0">
    <property type="development level" value="Tbio"/>
</dbReference>
<dbReference type="PRO" id="PR:Q9NVU0"/>
<dbReference type="Proteomes" id="UP000005640">
    <property type="component" value="Chromosome 16"/>
</dbReference>
<dbReference type="RNAct" id="Q9NVU0">
    <property type="molecule type" value="protein"/>
</dbReference>
<dbReference type="Bgee" id="ENSG00000058600">
    <property type="expression patterns" value="Expressed in gastrocnemius and 132 other cell types or tissues"/>
</dbReference>
<dbReference type="ExpressionAtlas" id="Q9NVU0">
    <property type="expression patterns" value="baseline and differential"/>
</dbReference>
<dbReference type="GO" id="GO:0005829">
    <property type="term" value="C:cytosol"/>
    <property type="evidence" value="ECO:0000304"/>
    <property type="project" value="Reactome"/>
</dbReference>
<dbReference type="GO" id="GO:0005654">
    <property type="term" value="C:nucleoplasm"/>
    <property type="evidence" value="ECO:0000314"/>
    <property type="project" value="HPA"/>
</dbReference>
<dbReference type="GO" id="GO:0005666">
    <property type="term" value="C:RNA polymerase III complex"/>
    <property type="evidence" value="ECO:0000314"/>
    <property type="project" value="UniProtKB"/>
</dbReference>
<dbReference type="GO" id="GO:0051607">
    <property type="term" value="P:defense response to virus"/>
    <property type="evidence" value="ECO:0007669"/>
    <property type="project" value="UniProtKB-KW"/>
</dbReference>
<dbReference type="GO" id="GO:0006351">
    <property type="term" value="P:DNA-templated transcription"/>
    <property type="evidence" value="ECO:0007669"/>
    <property type="project" value="InterPro"/>
</dbReference>
<dbReference type="GO" id="GO:0045087">
    <property type="term" value="P:innate immune response"/>
    <property type="evidence" value="ECO:0007669"/>
    <property type="project" value="UniProtKB-KW"/>
</dbReference>
<dbReference type="InterPro" id="IPR006886">
    <property type="entry name" value="RNA_pol_III_Rpc5"/>
</dbReference>
<dbReference type="InterPro" id="IPR045576">
    <property type="entry name" value="RPC5_C"/>
</dbReference>
<dbReference type="PANTHER" id="PTHR12069:SF0">
    <property type="entry name" value="DNA-DIRECTED RNA POLYMERASE III SUBUNIT RPC5"/>
    <property type="match status" value="1"/>
</dbReference>
<dbReference type="PANTHER" id="PTHR12069">
    <property type="entry name" value="DNA-DIRECTED RNA POLYMERASES III 80 KDA POLYPEPTIDE RNA POLYMERASE III SUBUNIT 5"/>
    <property type="match status" value="1"/>
</dbReference>
<dbReference type="Pfam" id="PF04801">
    <property type="entry name" value="RPC5"/>
    <property type="match status" value="1"/>
</dbReference>
<dbReference type="Pfam" id="PF19725">
    <property type="entry name" value="RPC5_C"/>
    <property type="match status" value="1"/>
</dbReference>
<proteinExistence type="evidence at protein level"/>